<comment type="function">
    <text evidence="1">Involved in the anomeric conversion of L-fucose.</text>
</comment>
<comment type="catalytic activity">
    <reaction evidence="1">
        <text>alpha-L-fucose = beta-L-fucose</text>
        <dbReference type="Rhea" id="RHEA:25580"/>
        <dbReference type="ChEBI" id="CHEBI:42548"/>
        <dbReference type="ChEBI" id="CHEBI:42589"/>
        <dbReference type="EC" id="5.1.3.29"/>
    </reaction>
</comment>
<comment type="pathway">
    <text evidence="1">Carbohydrate metabolism; L-fucose metabolism.</text>
</comment>
<comment type="subunit">
    <text evidence="1">Homodecamer.</text>
</comment>
<comment type="subcellular location">
    <subcellularLocation>
        <location evidence="1">Cytoplasm</location>
    </subcellularLocation>
</comment>
<comment type="similarity">
    <text evidence="1">Belongs to the RbsD / FucU family. FucU mutarotase subfamily.</text>
</comment>
<protein>
    <recommendedName>
        <fullName evidence="1">L-fucose mutarotase</fullName>
        <ecNumber evidence="1">5.1.3.29</ecNumber>
    </recommendedName>
    <alternativeName>
        <fullName evidence="1">Fucose 1-epimerase</fullName>
    </alternativeName>
    <alternativeName>
        <fullName evidence="1">Type-2 mutarotase</fullName>
    </alternativeName>
</protein>
<proteinExistence type="inferred from homology"/>
<evidence type="ECO:0000255" key="1">
    <source>
        <dbReference type="HAMAP-Rule" id="MF_01662"/>
    </source>
</evidence>
<sequence length="140" mass="15473">MLKTISPLISPELLKVLAEMGHGDEIIFSDAHFPAHSMGPQVIRADGLLVSDLLQAIIPLFELDSYAPPLVMMAAVEGDTLDPEVERRYRNALSLQAPCPDIIRINRFAFYERAQKAFAIVITGERAKYGNILLKKGVTP</sequence>
<gene>
    <name evidence="1" type="primary">fucU</name>
    <name type="ordered locus">ECIAI39_3226</name>
</gene>
<organism>
    <name type="scientific">Escherichia coli O7:K1 (strain IAI39 / ExPEC)</name>
    <dbReference type="NCBI Taxonomy" id="585057"/>
    <lineage>
        <taxon>Bacteria</taxon>
        <taxon>Pseudomonadati</taxon>
        <taxon>Pseudomonadota</taxon>
        <taxon>Gammaproteobacteria</taxon>
        <taxon>Enterobacterales</taxon>
        <taxon>Enterobacteriaceae</taxon>
        <taxon>Escherichia</taxon>
    </lineage>
</organism>
<reference key="1">
    <citation type="journal article" date="2009" name="PLoS Genet.">
        <title>Organised genome dynamics in the Escherichia coli species results in highly diverse adaptive paths.</title>
        <authorList>
            <person name="Touchon M."/>
            <person name="Hoede C."/>
            <person name="Tenaillon O."/>
            <person name="Barbe V."/>
            <person name="Baeriswyl S."/>
            <person name="Bidet P."/>
            <person name="Bingen E."/>
            <person name="Bonacorsi S."/>
            <person name="Bouchier C."/>
            <person name="Bouvet O."/>
            <person name="Calteau A."/>
            <person name="Chiapello H."/>
            <person name="Clermont O."/>
            <person name="Cruveiller S."/>
            <person name="Danchin A."/>
            <person name="Diard M."/>
            <person name="Dossat C."/>
            <person name="Karoui M.E."/>
            <person name="Frapy E."/>
            <person name="Garry L."/>
            <person name="Ghigo J.M."/>
            <person name="Gilles A.M."/>
            <person name="Johnson J."/>
            <person name="Le Bouguenec C."/>
            <person name="Lescat M."/>
            <person name="Mangenot S."/>
            <person name="Martinez-Jehanne V."/>
            <person name="Matic I."/>
            <person name="Nassif X."/>
            <person name="Oztas S."/>
            <person name="Petit M.A."/>
            <person name="Pichon C."/>
            <person name="Rouy Z."/>
            <person name="Ruf C.S."/>
            <person name="Schneider D."/>
            <person name="Tourret J."/>
            <person name="Vacherie B."/>
            <person name="Vallenet D."/>
            <person name="Medigue C."/>
            <person name="Rocha E.P.C."/>
            <person name="Denamur E."/>
        </authorList>
    </citation>
    <scope>NUCLEOTIDE SEQUENCE [LARGE SCALE GENOMIC DNA]</scope>
    <source>
        <strain>IAI39 / ExPEC</strain>
    </source>
</reference>
<keyword id="KW-0119">Carbohydrate metabolism</keyword>
<keyword id="KW-0963">Cytoplasm</keyword>
<keyword id="KW-0294">Fucose metabolism</keyword>
<keyword id="KW-0413">Isomerase</keyword>
<accession>B7NVV2</accession>
<name>FUCM_ECO7I</name>
<dbReference type="EC" id="5.1.3.29" evidence="1"/>
<dbReference type="EMBL" id="CU928164">
    <property type="protein sequence ID" value="CAR19345.1"/>
    <property type="molecule type" value="Genomic_DNA"/>
</dbReference>
<dbReference type="RefSeq" id="WP_000920840.1">
    <property type="nucleotide sequence ID" value="NC_011750.1"/>
</dbReference>
<dbReference type="RefSeq" id="YP_002409150.1">
    <property type="nucleotide sequence ID" value="NC_011750.1"/>
</dbReference>
<dbReference type="SMR" id="B7NVV2"/>
<dbReference type="STRING" id="585057.ECIAI39_3226"/>
<dbReference type="GeneID" id="93779194"/>
<dbReference type="KEGG" id="ect:ECIAI39_3226"/>
<dbReference type="PATRIC" id="fig|585057.6.peg.3352"/>
<dbReference type="HOGENOM" id="CLU_120075_1_0_6"/>
<dbReference type="UniPathway" id="UPA00956"/>
<dbReference type="Proteomes" id="UP000000749">
    <property type="component" value="Chromosome"/>
</dbReference>
<dbReference type="GO" id="GO:0005737">
    <property type="term" value="C:cytoplasm"/>
    <property type="evidence" value="ECO:0007669"/>
    <property type="project" value="UniProtKB-SubCell"/>
</dbReference>
<dbReference type="GO" id="GO:0042806">
    <property type="term" value="F:fucose binding"/>
    <property type="evidence" value="ECO:0007669"/>
    <property type="project" value="InterPro"/>
</dbReference>
<dbReference type="GO" id="GO:0036373">
    <property type="term" value="F:L-fucose mutarotase activity"/>
    <property type="evidence" value="ECO:0007669"/>
    <property type="project" value="UniProtKB-EC"/>
</dbReference>
<dbReference type="GO" id="GO:0036065">
    <property type="term" value="P:fucosylation"/>
    <property type="evidence" value="ECO:0007669"/>
    <property type="project" value="TreeGrafter"/>
</dbReference>
<dbReference type="GO" id="GO:0042354">
    <property type="term" value="P:L-fucose metabolic process"/>
    <property type="evidence" value="ECO:0007669"/>
    <property type="project" value="UniProtKB-UniRule"/>
</dbReference>
<dbReference type="FunFam" id="3.40.1650.10:FF:000001">
    <property type="entry name" value="L-fucose mutarotase"/>
    <property type="match status" value="1"/>
</dbReference>
<dbReference type="Gene3D" id="3.40.1650.10">
    <property type="entry name" value="RbsD-like domain"/>
    <property type="match status" value="1"/>
</dbReference>
<dbReference type="HAMAP" id="MF_01662">
    <property type="entry name" value="L_fucose_rotase"/>
    <property type="match status" value="1"/>
</dbReference>
<dbReference type="InterPro" id="IPR023751">
    <property type="entry name" value="L-fucose_mutarotase"/>
</dbReference>
<dbReference type="InterPro" id="IPR023750">
    <property type="entry name" value="RbsD-like_sf"/>
</dbReference>
<dbReference type="InterPro" id="IPR050443">
    <property type="entry name" value="RbsD/FucU_mutarotase"/>
</dbReference>
<dbReference type="InterPro" id="IPR007721">
    <property type="entry name" value="RbsD_FucU"/>
</dbReference>
<dbReference type="NCBIfam" id="NF011949">
    <property type="entry name" value="PRK15420.1"/>
    <property type="match status" value="1"/>
</dbReference>
<dbReference type="PANTHER" id="PTHR31690">
    <property type="entry name" value="FUCOSE MUTAROTASE"/>
    <property type="match status" value="1"/>
</dbReference>
<dbReference type="PANTHER" id="PTHR31690:SF4">
    <property type="entry name" value="FUCOSE MUTAROTASE"/>
    <property type="match status" value="1"/>
</dbReference>
<dbReference type="Pfam" id="PF05025">
    <property type="entry name" value="RbsD_FucU"/>
    <property type="match status" value="1"/>
</dbReference>
<dbReference type="SUPFAM" id="SSF102546">
    <property type="entry name" value="RbsD-like"/>
    <property type="match status" value="1"/>
</dbReference>
<feature type="chain" id="PRO_1000187179" description="L-fucose mutarotase">
    <location>
        <begin position="1"/>
        <end position="140"/>
    </location>
</feature>
<feature type="active site" description="Proton donor" evidence="1">
    <location>
        <position position="22"/>
    </location>
</feature>
<feature type="binding site" evidence="1">
    <location>
        <position position="30"/>
    </location>
    <ligand>
        <name>substrate</name>
    </ligand>
</feature>
<feature type="binding site" evidence="1">
    <location>
        <position position="107"/>
    </location>
    <ligand>
        <name>substrate</name>
    </ligand>
</feature>
<feature type="binding site" evidence="1">
    <location>
        <begin position="129"/>
        <end position="131"/>
    </location>
    <ligand>
        <name>substrate</name>
    </ligand>
</feature>